<gene>
    <name type="primary">RAB9A</name>
    <name type="synonym">RAB9</name>
</gene>
<accession>P24408</accession>
<dbReference type="EC" id="3.6.5.2" evidence="3"/>
<dbReference type="EMBL" id="X56386">
    <property type="protein sequence ID" value="CAA39797.1"/>
    <property type="molecule type" value="mRNA"/>
</dbReference>
<dbReference type="PIR" id="S36187">
    <property type="entry name" value="S36187"/>
</dbReference>
<dbReference type="RefSeq" id="NP_001183960.1">
    <property type="nucleotide sequence ID" value="NM_001197031.1"/>
</dbReference>
<dbReference type="RefSeq" id="XP_005641047.1">
    <property type="nucleotide sequence ID" value="XM_005640990.2"/>
</dbReference>
<dbReference type="RefSeq" id="XP_013966791.1">
    <property type="nucleotide sequence ID" value="XM_014111316.1"/>
</dbReference>
<dbReference type="RefSeq" id="XP_038304749.1">
    <property type="nucleotide sequence ID" value="XM_038448821.1"/>
</dbReference>
<dbReference type="RefSeq" id="XP_038304750.1">
    <property type="nucleotide sequence ID" value="XM_038448822.1"/>
</dbReference>
<dbReference type="RefSeq" id="XP_038304751.1">
    <property type="nucleotide sequence ID" value="XM_038448823.1"/>
</dbReference>
<dbReference type="RefSeq" id="XP_038304752.1">
    <property type="nucleotide sequence ID" value="XM_038448824.1"/>
</dbReference>
<dbReference type="PDB" id="1S8F">
    <property type="method" value="X-ray"/>
    <property type="resolution" value="1.77 A"/>
    <property type="chains" value="A/B=1-174"/>
</dbReference>
<dbReference type="PDBsum" id="1S8F"/>
<dbReference type="SMR" id="P24408"/>
<dbReference type="FunCoup" id="P24408">
    <property type="interactions" value="297"/>
</dbReference>
<dbReference type="IntAct" id="P24408">
    <property type="interactions" value="2"/>
</dbReference>
<dbReference type="STRING" id="9615.ENSCAFP00000017285"/>
<dbReference type="PaxDb" id="9612-ENSCAFP00000017285"/>
<dbReference type="Ensembl" id="ENSCAFT00000018660.4">
    <property type="protein sequence ID" value="ENSCAFP00000017285.3"/>
    <property type="gene ID" value="ENSCAFG00000011750.4"/>
</dbReference>
<dbReference type="Ensembl" id="ENSCAFT00030017737.1">
    <property type="protein sequence ID" value="ENSCAFP00030015493.1"/>
    <property type="gene ID" value="ENSCAFG00030009574.1"/>
</dbReference>
<dbReference type="Ensembl" id="ENSCAFT00040020233.1">
    <property type="protein sequence ID" value="ENSCAFP00040017553.1"/>
    <property type="gene ID" value="ENSCAFG00040010945.1"/>
</dbReference>
<dbReference type="Ensembl" id="ENSCAFT00845050307.1">
    <property type="protein sequence ID" value="ENSCAFP00845039439.1"/>
    <property type="gene ID" value="ENSCAFG00845028510.1"/>
</dbReference>
<dbReference type="GeneID" id="403947"/>
<dbReference type="KEGG" id="cfa:403947"/>
<dbReference type="CTD" id="9367"/>
<dbReference type="VEuPathDB" id="HostDB:ENSCAFG00845028510"/>
<dbReference type="VGNC" id="VGNC:45297">
    <property type="gene designation" value="RAB9A"/>
</dbReference>
<dbReference type="eggNOG" id="KOG0394">
    <property type="taxonomic scope" value="Eukaryota"/>
</dbReference>
<dbReference type="GeneTree" id="ENSGT00940000158619"/>
<dbReference type="HOGENOM" id="CLU_041217_10_6_1"/>
<dbReference type="InParanoid" id="P24408"/>
<dbReference type="OMA" id="WCAEQKV"/>
<dbReference type="OrthoDB" id="1436450at2759"/>
<dbReference type="TreeFam" id="TF326442"/>
<dbReference type="Reactome" id="R-CFA-6811440">
    <property type="pathway name" value="Retrograde transport at the Trans-Golgi-Network"/>
</dbReference>
<dbReference type="Reactome" id="R-CFA-8873719">
    <property type="pathway name" value="RAB geranylgeranylation"/>
</dbReference>
<dbReference type="Reactome" id="R-CFA-8876198">
    <property type="pathway name" value="RAB GEFs exchange GTP for GDP on RABs"/>
</dbReference>
<dbReference type="Reactome" id="R-CFA-9706019">
    <property type="pathway name" value="RHOBTB3 ATPase cycle"/>
</dbReference>
<dbReference type="EvolutionaryTrace" id="P24408"/>
<dbReference type="Proteomes" id="UP000002254">
    <property type="component" value="Chromosome X"/>
</dbReference>
<dbReference type="Proteomes" id="UP000694429">
    <property type="component" value="Unassembled WGS sequence"/>
</dbReference>
<dbReference type="Proteomes" id="UP000694542">
    <property type="component" value="Chromosome X"/>
</dbReference>
<dbReference type="Proteomes" id="UP000805418">
    <property type="component" value="Chromosome X"/>
</dbReference>
<dbReference type="Bgee" id="ENSCAFG00000011750">
    <property type="expression patterns" value="Expressed in spinal cord and 48 other cell types or tissues"/>
</dbReference>
<dbReference type="GO" id="GO:0005829">
    <property type="term" value="C:cytosol"/>
    <property type="evidence" value="ECO:0007669"/>
    <property type="project" value="GOC"/>
</dbReference>
<dbReference type="GO" id="GO:0005789">
    <property type="term" value="C:endoplasmic reticulum membrane"/>
    <property type="evidence" value="ECO:0007669"/>
    <property type="project" value="UniProtKB-SubCell"/>
</dbReference>
<dbReference type="GO" id="GO:0000139">
    <property type="term" value="C:Golgi membrane"/>
    <property type="evidence" value="ECO:0007669"/>
    <property type="project" value="UniProtKB-SubCell"/>
</dbReference>
<dbReference type="GO" id="GO:0005770">
    <property type="term" value="C:late endosome"/>
    <property type="evidence" value="ECO:0000318"/>
    <property type="project" value="GO_Central"/>
</dbReference>
<dbReference type="GO" id="GO:0005764">
    <property type="term" value="C:lysosome"/>
    <property type="evidence" value="ECO:0000318"/>
    <property type="project" value="GO_Central"/>
</dbReference>
<dbReference type="GO" id="GO:0042470">
    <property type="term" value="C:melanosome"/>
    <property type="evidence" value="ECO:0000250"/>
    <property type="project" value="UniProtKB"/>
</dbReference>
<dbReference type="GO" id="GO:0045335">
    <property type="term" value="C:phagocytic vesicle"/>
    <property type="evidence" value="ECO:0000250"/>
    <property type="project" value="UniProtKB"/>
</dbReference>
<dbReference type="GO" id="GO:0030670">
    <property type="term" value="C:phagocytic vesicle membrane"/>
    <property type="evidence" value="ECO:0007669"/>
    <property type="project" value="UniProtKB-SubCell"/>
</dbReference>
<dbReference type="GO" id="GO:0005886">
    <property type="term" value="C:plasma membrane"/>
    <property type="evidence" value="ECO:0007669"/>
    <property type="project" value="UniProtKB-SubCell"/>
</dbReference>
<dbReference type="GO" id="GO:0003925">
    <property type="term" value="F:G protein activity"/>
    <property type="evidence" value="ECO:0007669"/>
    <property type="project" value="Ensembl"/>
</dbReference>
<dbReference type="GO" id="GO:0019003">
    <property type="term" value="F:GDP binding"/>
    <property type="evidence" value="ECO:0000250"/>
    <property type="project" value="UniProtKB"/>
</dbReference>
<dbReference type="GO" id="GO:0005525">
    <property type="term" value="F:GTP binding"/>
    <property type="evidence" value="ECO:0000250"/>
    <property type="project" value="UniProtKB"/>
</dbReference>
<dbReference type="GO" id="GO:0003924">
    <property type="term" value="F:GTPase activity"/>
    <property type="evidence" value="ECO:0000250"/>
    <property type="project" value="UniProtKB"/>
</dbReference>
<dbReference type="GO" id="GO:0042802">
    <property type="term" value="F:identical protein binding"/>
    <property type="evidence" value="ECO:0007669"/>
    <property type="project" value="Ensembl"/>
</dbReference>
<dbReference type="GO" id="GO:0045921">
    <property type="term" value="P:positive regulation of exocytosis"/>
    <property type="evidence" value="ECO:0007669"/>
    <property type="project" value="Ensembl"/>
</dbReference>
<dbReference type="GO" id="GO:0015031">
    <property type="term" value="P:protein transport"/>
    <property type="evidence" value="ECO:0007669"/>
    <property type="project" value="UniProtKB-KW"/>
</dbReference>
<dbReference type="GO" id="GO:0032482">
    <property type="term" value="P:Rab protein signal transduction"/>
    <property type="evidence" value="ECO:0007669"/>
    <property type="project" value="InterPro"/>
</dbReference>
<dbReference type="GO" id="GO:0006898">
    <property type="term" value="P:receptor-mediated endocytosis"/>
    <property type="evidence" value="ECO:0007669"/>
    <property type="project" value="Ensembl"/>
</dbReference>
<dbReference type="GO" id="GO:0032880">
    <property type="term" value="P:regulation of protein localization"/>
    <property type="evidence" value="ECO:0007669"/>
    <property type="project" value="Ensembl"/>
</dbReference>
<dbReference type="GO" id="GO:0042147">
    <property type="term" value="P:retrograde transport, endosome to Golgi"/>
    <property type="evidence" value="ECO:0000318"/>
    <property type="project" value="GO_Central"/>
</dbReference>
<dbReference type="CDD" id="cd04116">
    <property type="entry name" value="Rab9"/>
    <property type="match status" value="1"/>
</dbReference>
<dbReference type="FunFam" id="3.40.50.300:FF:000360">
    <property type="entry name" value="RAB9B, member RAS oncogene family"/>
    <property type="match status" value="1"/>
</dbReference>
<dbReference type="Gene3D" id="3.40.50.300">
    <property type="entry name" value="P-loop containing nucleotide triphosphate hydrolases"/>
    <property type="match status" value="1"/>
</dbReference>
<dbReference type="InterPro" id="IPR027417">
    <property type="entry name" value="P-loop_NTPase"/>
</dbReference>
<dbReference type="InterPro" id="IPR041824">
    <property type="entry name" value="Rab9"/>
</dbReference>
<dbReference type="InterPro" id="IPR005225">
    <property type="entry name" value="Small_GTP-bd"/>
</dbReference>
<dbReference type="InterPro" id="IPR001806">
    <property type="entry name" value="Small_GTPase"/>
</dbReference>
<dbReference type="NCBIfam" id="TIGR00231">
    <property type="entry name" value="small_GTP"/>
    <property type="match status" value="1"/>
</dbReference>
<dbReference type="PANTHER" id="PTHR47981">
    <property type="entry name" value="RAB FAMILY"/>
    <property type="match status" value="1"/>
</dbReference>
<dbReference type="PANTHER" id="PTHR47981:SF9">
    <property type="entry name" value="RAS-RELATED PROTEIN RAB-9A"/>
    <property type="match status" value="1"/>
</dbReference>
<dbReference type="Pfam" id="PF00071">
    <property type="entry name" value="Ras"/>
    <property type="match status" value="1"/>
</dbReference>
<dbReference type="PRINTS" id="PR00449">
    <property type="entry name" value="RASTRNSFRMNG"/>
</dbReference>
<dbReference type="SMART" id="SM00175">
    <property type="entry name" value="RAB"/>
    <property type="match status" value="1"/>
</dbReference>
<dbReference type="SMART" id="SM00176">
    <property type="entry name" value="RAN"/>
    <property type="match status" value="1"/>
</dbReference>
<dbReference type="SMART" id="SM00173">
    <property type="entry name" value="RAS"/>
    <property type="match status" value="1"/>
</dbReference>
<dbReference type="SMART" id="SM00174">
    <property type="entry name" value="RHO"/>
    <property type="match status" value="1"/>
</dbReference>
<dbReference type="SUPFAM" id="SSF52540">
    <property type="entry name" value="P-loop containing nucleoside triphosphate hydrolases"/>
    <property type="match status" value="1"/>
</dbReference>
<dbReference type="PROSITE" id="PS51419">
    <property type="entry name" value="RAB"/>
    <property type="match status" value="1"/>
</dbReference>
<sequence length="201" mass="22811">MAGKSSLFKVILLGDGGVGKSSLMNRYVTNKFDTQLFHTIGVEFLNKDLEVDGHFVTMQIWDTAGQERFRSLRTPFYRGSDCCLLTFSVDDSQSFQNLSNWKKEFIYYADVKEPESFPFVILGNKIDISERQVSTEEAQAWCRDNGDYPYFETSAKDATNVAAAFEEAVRRVLATEDRSDHLIQTDTVSLHRKPKPSSSCC</sequence>
<keyword id="KW-0002">3D-structure</keyword>
<keyword id="KW-0007">Acetylation</keyword>
<keyword id="KW-1003">Cell membrane</keyword>
<keyword id="KW-0968">Cytoplasmic vesicle</keyword>
<keyword id="KW-0256">Endoplasmic reticulum</keyword>
<keyword id="KW-0967">Endosome</keyword>
<keyword id="KW-0333">Golgi apparatus</keyword>
<keyword id="KW-0342">GTP-binding</keyword>
<keyword id="KW-0378">Hydrolase</keyword>
<keyword id="KW-0449">Lipoprotein</keyword>
<keyword id="KW-0460">Magnesium</keyword>
<keyword id="KW-0472">Membrane</keyword>
<keyword id="KW-0479">Metal-binding</keyword>
<keyword id="KW-0547">Nucleotide-binding</keyword>
<keyword id="KW-0597">Phosphoprotein</keyword>
<keyword id="KW-0636">Prenylation</keyword>
<keyword id="KW-0653">Protein transport</keyword>
<keyword id="KW-1185">Reference proteome</keyword>
<keyword id="KW-0813">Transport</keyword>
<comment type="function">
    <text evidence="2 3 4 7">The small GTPases Rab are key regulators of intracellular membrane trafficking, from the formation of transport vesicles to their fusion with membranes. Rabs cycle between an inactive GDP-bound form and an active GTP-bound form that is able to recruit to membranes different sets of downstream effectors directly responsible for vesicle formation, movement, tethering and fusion (By similarity). RAB9A is involved in the transport of proteins between the endosomes and the trans-Golgi network (TGN) (PubMed:8440258). Specifically uses NDE1/NDEL1 as an effector to interact with the dynein motor complex in order to control retrograde trafficking of RAB9-associated late endosomes to the TGN (By similarity). Involved in the recruitment of SGSM2 to melanosomes and is required for the proper trafficking of melanogenic enzymes TYR, TYRP1 and DCT/TYRP2 to melanosomes in melanocytes (By similarity).</text>
</comment>
<comment type="catalytic activity">
    <reaction evidence="3">
        <text>GTP + H2O = GDP + phosphate + H(+)</text>
        <dbReference type="Rhea" id="RHEA:19669"/>
        <dbReference type="ChEBI" id="CHEBI:15377"/>
        <dbReference type="ChEBI" id="CHEBI:15378"/>
        <dbReference type="ChEBI" id="CHEBI:37565"/>
        <dbReference type="ChEBI" id="CHEBI:43474"/>
        <dbReference type="ChEBI" id="CHEBI:58189"/>
        <dbReference type="EC" id="3.6.5.2"/>
    </reaction>
    <physiologicalReaction direction="left-to-right" evidence="3">
        <dbReference type="Rhea" id="RHEA:19670"/>
    </physiologicalReaction>
</comment>
<comment type="cofactor">
    <cofactor evidence="2">
        <name>Mg(2+)</name>
        <dbReference type="ChEBI" id="CHEBI:18420"/>
    </cofactor>
</comment>
<comment type="activity regulation">
    <text evidence="2">Regulated by guanine nucleotide exchange factors (GEFs) which promote the exchange of bound GDP for free GTP. Regulated by GTPase activating proteins (GAPs) which increase the GTP hydrolysis activity. Inhibited by GDP dissociation inhibitors (GDIs).</text>
</comment>
<comment type="subunit">
    <text evidence="2 6">Interacts (preferentially in its GTP-bound form) with GCC2 (via its GRIP domain) (PubMed:16885419). Interacts (GTP-bound form) with SGSM1; the GDP-bound form has much lower affinity for SGSM1. Interacts with SGSM2. The GTP-bound form but not the GDP-bound form interacts with HPS4 and the BLOC-3 complex (heterodimer of HPS1 and HPS4) but does not interact with HPS1 alone (By similarity). Interacts (GTP-bound form) with NDE1; two RAB9A-GTP molecules lie on the opposite sides of the NDE1 homodimer; the interaction leads to RAB9A-dynein motor tethering. Interacts (GTP-bound form) with NDEL1 (By similarity).</text>
</comment>
<comment type="interaction">
    <interactant intactId="EBI-1646050">
        <id>P24408</id>
    </interactant>
    <interactant intactId="EBI-2367123">
        <id>O94955</id>
        <label>RHOBTB3</label>
    </interactant>
    <organismsDiffer>true</organismsDiffer>
    <experiments>5</experiments>
</comment>
<comment type="subcellular location">
    <subcellularLocation>
        <location evidence="2">Cell membrane</location>
        <topology evidence="2">Lipid-anchor</topology>
        <orientation evidence="2">Cytoplasmic side</orientation>
    </subcellularLocation>
    <subcellularLocation>
        <location evidence="2">Endoplasmic reticulum membrane</location>
    </subcellularLocation>
    <subcellularLocation>
        <location evidence="2">Golgi apparatus membrane</location>
    </subcellularLocation>
    <subcellularLocation>
        <location evidence="2">Late endosome</location>
    </subcellularLocation>
    <subcellularLocation>
        <location evidence="2">Cytoplasmic vesicle</location>
        <location evidence="2">Phagosome membrane</location>
        <topology evidence="2">Lipid-anchor</topology>
        <orientation evidence="2">Cytoplasmic side</orientation>
    </subcellularLocation>
    <subcellularLocation>
        <location evidence="2">Cytoplasmic vesicle</location>
        <location evidence="2">Phagosome</location>
    </subcellularLocation>
    <subcellularLocation>
        <location evidence="2">Cytoplasmic vesicle membrane</location>
    </subcellularLocation>
    <subcellularLocation>
        <location evidence="4">Melanosome</location>
    </subcellularLocation>
    <text evidence="2">Colocalizes with OSBPL1A at the late endosome. Recruited to phagosomes containing S.aureus or M.tuberculosis. Mainly localizes to late endosomes and partially localizes to Golgi. Colocalizes with NDE1 to membrane vesicles.</text>
</comment>
<comment type="similarity">
    <text evidence="8">Belongs to the small GTPase superfamily. Rab family.</text>
</comment>
<organism>
    <name type="scientific">Canis lupus familiaris</name>
    <name type="common">Dog</name>
    <name type="synonym">Canis familiaris</name>
    <dbReference type="NCBI Taxonomy" id="9615"/>
    <lineage>
        <taxon>Eukaryota</taxon>
        <taxon>Metazoa</taxon>
        <taxon>Chordata</taxon>
        <taxon>Craniata</taxon>
        <taxon>Vertebrata</taxon>
        <taxon>Euteleostomi</taxon>
        <taxon>Mammalia</taxon>
        <taxon>Eutheria</taxon>
        <taxon>Laurasiatheria</taxon>
        <taxon>Carnivora</taxon>
        <taxon>Caniformia</taxon>
        <taxon>Canidae</taxon>
        <taxon>Canis</taxon>
    </lineage>
</organism>
<feature type="initiator methionine" description="Removed" evidence="2">
    <location>
        <position position="1"/>
    </location>
</feature>
<feature type="chain" id="PRO_0000121138" description="Ras-related protein Rab-9A">
    <location>
        <begin position="2"/>
        <end position="201"/>
    </location>
</feature>
<feature type="short sequence motif" description="Switch 1" evidence="2">
    <location>
        <begin position="31"/>
        <end position="42"/>
    </location>
</feature>
<feature type="short sequence motif" description="Switch 2" evidence="2">
    <location>
        <begin position="64"/>
        <end position="78"/>
    </location>
</feature>
<feature type="binding site" evidence="5 9">
    <location>
        <position position="17"/>
    </location>
    <ligand>
        <name>GDP</name>
        <dbReference type="ChEBI" id="CHEBI:58189"/>
    </ligand>
</feature>
<feature type="binding site" evidence="2">
    <location>
        <position position="17"/>
    </location>
    <ligand>
        <name>GTP</name>
        <dbReference type="ChEBI" id="CHEBI:37565"/>
    </ligand>
</feature>
<feature type="binding site" evidence="2">
    <location>
        <position position="18"/>
    </location>
    <ligand>
        <name>GTP</name>
        <dbReference type="ChEBI" id="CHEBI:37565"/>
    </ligand>
</feature>
<feature type="binding site" evidence="5 9">
    <location>
        <position position="19"/>
    </location>
    <ligand>
        <name>GDP</name>
        <dbReference type="ChEBI" id="CHEBI:58189"/>
    </ligand>
</feature>
<feature type="binding site" evidence="2">
    <location>
        <position position="19"/>
    </location>
    <ligand>
        <name>GTP</name>
        <dbReference type="ChEBI" id="CHEBI:37565"/>
    </ligand>
</feature>
<feature type="binding site" evidence="5 9">
    <location>
        <position position="20"/>
    </location>
    <ligand>
        <name>GDP</name>
        <dbReference type="ChEBI" id="CHEBI:58189"/>
    </ligand>
</feature>
<feature type="binding site" evidence="2">
    <location>
        <position position="20"/>
    </location>
    <ligand>
        <name>GTP</name>
        <dbReference type="ChEBI" id="CHEBI:37565"/>
    </ligand>
</feature>
<feature type="binding site" evidence="5 9">
    <location>
        <position position="21"/>
    </location>
    <ligand>
        <name>GDP</name>
        <dbReference type="ChEBI" id="CHEBI:58189"/>
    </ligand>
</feature>
<feature type="binding site" evidence="2">
    <location>
        <position position="21"/>
    </location>
    <ligand>
        <name>GTP</name>
        <dbReference type="ChEBI" id="CHEBI:37565"/>
    </ligand>
</feature>
<feature type="binding site" evidence="2">
    <location>
        <position position="21"/>
    </location>
    <ligand>
        <name>Mg(2+)</name>
        <dbReference type="ChEBI" id="CHEBI:18420"/>
    </ligand>
</feature>
<feature type="binding site" evidence="5 9">
    <location>
        <position position="22"/>
    </location>
    <ligand>
        <name>GDP</name>
        <dbReference type="ChEBI" id="CHEBI:58189"/>
    </ligand>
</feature>
<feature type="binding site" evidence="2">
    <location>
        <position position="22"/>
    </location>
    <ligand>
        <name>GTP</name>
        <dbReference type="ChEBI" id="CHEBI:37565"/>
    </ligand>
</feature>
<feature type="binding site" evidence="2">
    <location>
        <position position="34"/>
    </location>
    <ligand>
        <name>GTP</name>
        <dbReference type="ChEBI" id="CHEBI:37565"/>
    </ligand>
</feature>
<feature type="binding site" evidence="2">
    <location>
        <position position="38"/>
    </location>
    <ligand>
        <name>GTP</name>
        <dbReference type="ChEBI" id="CHEBI:37565"/>
    </ligand>
</feature>
<feature type="binding site" evidence="2">
    <location>
        <position position="39"/>
    </location>
    <ligand>
        <name>GTP</name>
        <dbReference type="ChEBI" id="CHEBI:37565"/>
    </ligand>
</feature>
<feature type="binding site" evidence="2">
    <location>
        <position position="39"/>
    </location>
    <ligand>
        <name>Mg(2+)</name>
        <dbReference type="ChEBI" id="CHEBI:18420"/>
    </ligand>
</feature>
<feature type="binding site" evidence="2">
    <location>
        <position position="62"/>
    </location>
    <ligand>
        <name>Mg(2+)</name>
        <dbReference type="ChEBI" id="CHEBI:18420"/>
    </ligand>
</feature>
<feature type="binding site" evidence="2">
    <location>
        <position position="65"/>
    </location>
    <ligand>
        <name>GTP</name>
        <dbReference type="ChEBI" id="CHEBI:37565"/>
    </ligand>
</feature>
<feature type="binding site" evidence="5 9">
    <location>
        <position position="124"/>
    </location>
    <ligand>
        <name>GDP</name>
        <dbReference type="ChEBI" id="CHEBI:58189"/>
    </ligand>
</feature>
<feature type="binding site" evidence="2">
    <location>
        <position position="124"/>
    </location>
    <ligand>
        <name>GTP</name>
        <dbReference type="ChEBI" id="CHEBI:37565"/>
    </ligand>
</feature>
<feature type="binding site" evidence="2">
    <location>
        <position position="125"/>
    </location>
    <ligand>
        <name>GDP</name>
        <dbReference type="ChEBI" id="CHEBI:58189"/>
    </ligand>
</feature>
<feature type="binding site" evidence="2">
    <location>
        <position position="125"/>
    </location>
    <ligand>
        <name>GTP</name>
        <dbReference type="ChEBI" id="CHEBI:37565"/>
    </ligand>
</feature>
<feature type="binding site" evidence="2">
    <location>
        <position position="127"/>
    </location>
    <ligand>
        <name>GDP</name>
        <dbReference type="ChEBI" id="CHEBI:58189"/>
    </ligand>
</feature>
<feature type="binding site" evidence="2">
    <location>
        <position position="127"/>
    </location>
    <ligand>
        <name>GTP</name>
        <dbReference type="ChEBI" id="CHEBI:37565"/>
    </ligand>
</feature>
<feature type="binding site" evidence="5 9">
    <location>
        <position position="155"/>
    </location>
    <ligand>
        <name>GDP</name>
        <dbReference type="ChEBI" id="CHEBI:58189"/>
    </ligand>
</feature>
<feature type="binding site" evidence="2">
    <location>
        <position position="156"/>
    </location>
    <ligand>
        <name>GDP</name>
        <dbReference type="ChEBI" id="CHEBI:58189"/>
    </ligand>
</feature>
<feature type="binding site" evidence="2">
    <location>
        <position position="156"/>
    </location>
    <ligand>
        <name>GTP</name>
        <dbReference type="ChEBI" id="CHEBI:37565"/>
    </ligand>
</feature>
<feature type="modified residue" description="N-acetylalanine" evidence="2">
    <location>
        <position position="2"/>
    </location>
</feature>
<feature type="modified residue" description="Phosphoserine" evidence="2">
    <location>
        <position position="179"/>
    </location>
</feature>
<feature type="modified residue" description="Phosphothreonine" evidence="2">
    <location>
        <position position="187"/>
    </location>
</feature>
<feature type="lipid moiety-binding region" description="S-geranylgeranyl cysteine" evidence="1">
    <location>
        <position position="200"/>
    </location>
</feature>
<feature type="lipid moiety-binding region" description="S-geranylgeranyl cysteine" evidence="1">
    <location>
        <position position="201"/>
    </location>
</feature>
<feature type="strand" evidence="10">
    <location>
        <begin position="7"/>
        <end position="13"/>
    </location>
</feature>
<feature type="helix" evidence="10">
    <location>
        <begin position="20"/>
        <end position="29"/>
    </location>
</feature>
<feature type="strand" evidence="10">
    <location>
        <begin position="38"/>
        <end position="51"/>
    </location>
</feature>
<feature type="strand" evidence="10">
    <location>
        <begin position="54"/>
        <end position="63"/>
    </location>
</feature>
<feature type="helix" evidence="10">
    <location>
        <begin position="67"/>
        <end position="69"/>
    </location>
</feature>
<feature type="helix" evidence="10">
    <location>
        <begin position="70"/>
        <end position="73"/>
    </location>
</feature>
<feature type="helix" evidence="10">
    <location>
        <begin position="74"/>
        <end position="76"/>
    </location>
</feature>
<feature type="strand" evidence="10">
    <location>
        <begin position="81"/>
        <end position="88"/>
    </location>
</feature>
<feature type="helix" evidence="10">
    <location>
        <begin position="92"/>
        <end position="96"/>
    </location>
</feature>
<feature type="helix" evidence="10">
    <location>
        <begin position="98"/>
        <end position="109"/>
    </location>
</feature>
<feature type="strand" evidence="10">
    <location>
        <begin position="119"/>
        <end position="124"/>
    </location>
</feature>
<feature type="helix" evidence="10">
    <location>
        <begin position="135"/>
        <end position="144"/>
    </location>
</feature>
<feature type="strand" evidence="10">
    <location>
        <begin position="150"/>
        <end position="152"/>
    </location>
</feature>
<feature type="turn" evidence="10">
    <location>
        <begin position="155"/>
        <end position="157"/>
    </location>
</feature>
<feature type="helix" evidence="10">
    <location>
        <begin position="161"/>
        <end position="173"/>
    </location>
</feature>
<protein>
    <recommendedName>
        <fullName>Ras-related protein Rab-9A</fullName>
        <ecNumber evidence="3">3.6.5.2</ecNumber>
    </recommendedName>
</protein>
<evidence type="ECO:0000250" key="1"/>
<evidence type="ECO:0000250" key="2">
    <source>
        <dbReference type="UniProtKB" id="P51151"/>
    </source>
</evidence>
<evidence type="ECO:0000250" key="3">
    <source>
        <dbReference type="UniProtKB" id="P62820"/>
    </source>
</evidence>
<evidence type="ECO:0000250" key="4">
    <source>
        <dbReference type="UniProtKB" id="Q9R0M6"/>
    </source>
</evidence>
<evidence type="ECO:0000269" key="5">
    <source>
    </source>
</evidence>
<evidence type="ECO:0000269" key="6">
    <source>
    </source>
</evidence>
<evidence type="ECO:0000269" key="7">
    <source>
    </source>
</evidence>
<evidence type="ECO:0000305" key="8"/>
<evidence type="ECO:0007744" key="9">
    <source>
        <dbReference type="PDB" id="1S8F"/>
    </source>
</evidence>
<evidence type="ECO:0007829" key="10">
    <source>
        <dbReference type="PDB" id="1S8F"/>
    </source>
</evidence>
<name>RAB9A_CANLF</name>
<reference key="1">
    <citation type="journal article" date="1993" name="EMBO J.">
        <title>Rab9 functions in transport between late endosomes and the trans Golgi network.</title>
        <authorList>
            <person name="Lombardi D."/>
            <person name="Soldati T."/>
            <person name="Riederer M.A."/>
            <person name="Goda Y."/>
            <person name="Zerial M."/>
            <person name="Pfeffer S.R."/>
        </authorList>
    </citation>
    <scope>NUCLEOTIDE SEQUENCE [MRNA]</scope>
    <scope>FUNCTION</scope>
    <source>
        <strain>Cocker spaniel</strain>
        <tissue>Kidney</tissue>
    </source>
</reference>
<reference key="2">
    <citation type="journal article" date="1990" name="Mol. Cell. Biol.">
        <title>Molecular cloning of YPT1/SEC4-related cDNAs from an epithelial cell line.</title>
        <authorList>
            <person name="Chavrier P."/>
            <person name="Vingron M."/>
            <person name="Sander C."/>
            <person name="Simons K."/>
            <person name="Zerial M."/>
        </authorList>
    </citation>
    <scope>NUCLEOTIDE SEQUENCE [MRNA] OF 30-201</scope>
    <source>
        <strain>Cocker spaniel</strain>
    </source>
</reference>
<reference key="3">
    <citation type="journal article" date="2006" name="Mol. Biol. Cell">
        <title>A functional role for the GCC185 golgin in mannose 6-phosphate receptor recycling.</title>
        <authorList>
            <person name="Reddy J.V."/>
            <person name="Burguete A.S."/>
            <person name="Sridevi K."/>
            <person name="Ganley I.G."/>
            <person name="Nottingham R.M."/>
            <person name="Pfeffer S.R."/>
        </authorList>
    </citation>
    <scope>INTERACTION WITH GCC2</scope>
</reference>
<reference key="4">
    <citation type="journal article" date="2004" name="FEBS Lett.">
        <title>Crystal structure of Rab9 complexed to GDP reveals a dimer with an active conformation of switch II.</title>
        <authorList>
            <person name="Wittmann J.G."/>
            <person name="Rudolph M.G."/>
        </authorList>
    </citation>
    <scope>X-RAY CRYSTALLOGRAPHY (1.77 ANGSTROMS) OF 1-174 IN COMPLEX WITH GDP</scope>
</reference>
<proteinExistence type="evidence at protein level"/>